<gene>
    <name evidence="15" type="primary">aurB</name>
    <name evidence="12" type="synonym">ial</name>
    <name evidence="15" type="ORF">CG6620</name>
</gene>
<reference key="1">
    <citation type="journal article" date="1999" name="DNA Cell Biol.">
        <title>Cloning, mapping, and expression of ial, a novel Drosophila member of the Ipl1/aurora mitotic control kinase family.</title>
        <authorList>
            <person name="Reich A."/>
            <person name="Yanai A."/>
            <person name="Mesilaty-Gross S."/>
            <person name="Chen-Moses A."/>
            <person name="Wides R."/>
            <person name="Motro B."/>
        </authorList>
    </citation>
    <scope>NUCLEOTIDE SEQUENCE [MRNA]</scope>
    <scope>DEVELOPMENTAL STAGE</scope>
    <source>
        <strain>Canton-S</strain>
    </source>
</reference>
<reference key="2">
    <citation type="journal article" date="1999" name="Gene">
        <title>The Drosophila STAM gene homolog is in a tight gene cluster, and its expression correlates to that of the adjacent gene ial.</title>
        <authorList>
            <person name="Mesilaty-Gross S."/>
            <person name="Reich A."/>
            <person name="Motro B."/>
            <person name="Wides R."/>
        </authorList>
    </citation>
    <scope>NUCLEOTIDE SEQUENCE [GENOMIC DNA]</scope>
    <scope>DEVELOPMENTAL STAGE</scope>
    <source>
        <strain>Canton-S</strain>
    </source>
</reference>
<reference key="3">
    <citation type="journal article" date="2000" name="Science">
        <title>The genome sequence of Drosophila melanogaster.</title>
        <authorList>
            <person name="Adams M.D."/>
            <person name="Celniker S.E."/>
            <person name="Holt R.A."/>
            <person name="Evans C.A."/>
            <person name="Gocayne J.D."/>
            <person name="Amanatides P.G."/>
            <person name="Scherer S.E."/>
            <person name="Li P.W."/>
            <person name="Hoskins R.A."/>
            <person name="Galle R.F."/>
            <person name="George R.A."/>
            <person name="Lewis S.E."/>
            <person name="Richards S."/>
            <person name="Ashburner M."/>
            <person name="Henderson S.N."/>
            <person name="Sutton G.G."/>
            <person name="Wortman J.R."/>
            <person name="Yandell M.D."/>
            <person name="Zhang Q."/>
            <person name="Chen L.X."/>
            <person name="Brandon R.C."/>
            <person name="Rogers Y.-H.C."/>
            <person name="Blazej R.G."/>
            <person name="Champe M."/>
            <person name="Pfeiffer B.D."/>
            <person name="Wan K.H."/>
            <person name="Doyle C."/>
            <person name="Baxter E.G."/>
            <person name="Helt G."/>
            <person name="Nelson C.R."/>
            <person name="Miklos G.L.G."/>
            <person name="Abril J.F."/>
            <person name="Agbayani A."/>
            <person name="An H.-J."/>
            <person name="Andrews-Pfannkoch C."/>
            <person name="Baldwin D."/>
            <person name="Ballew R.M."/>
            <person name="Basu A."/>
            <person name="Baxendale J."/>
            <person name="Bayraktaroglu L."/>
            <person name="Beasley E.M."/>
            <person name="Beeson K.Y."/>
            <person name="Benos P.V."/>
            <person name="Berman B.P."/>
            <person name="Bhandari D."/>
            <person name="Bolshakov S."/>
            <person name="Borkova D."/>
            <person name="Botchan M.R."/>
            <person name="Bouck J."/>
            <person name="Brokstein P."/>
            <person name="Brottier P."/>
            <person name="Burtis K.C."/>
            <person name="Busam D.A."/>
            <person name="Butler H."/>
            <person name="Cadieu E."/>
            <person name="Center A."/>
            <person name="Chandra I."/>
            <person name="Cherry J.M."/>
            <person name="Cawley S."/>
            <person name="Dahlke C."/>
            <person name="Davenport L.B."/>
            <person name="Davies P."/>
            <person name="de Pablos B."/>
            <person name="Delcher A."/>
            <person name="Deng Z."/>
            <person name="Mays A.D."/>
            <person name="Dew I."/>
            <person name="Dietz S.M."/>
            <person name="Dodson K."/>
            <person name="Doup L.E."/>
            <person name="Downes M."/>
            <person name="Dugan-Rocha S."/>
            <person name="Dunkov B.C."/>
            <person name="Dunn P."/>
            <person name="Durbin K.J."/>
            <person name="Evangelista C.C."/>
            <person name="Ferraz C."/>
            <person name="Ferriera S."/>
            <person name="Fleischmann W."/>
            <person name="Fosler C."/>
            <person name="Gabrielian A.E."/>
            <person name="Garg N.S."/>
            <person name="Gelbart W.M."/>
            <person name="Glasser K."/>
            <person name="Glodek A."/>
            <person name="Gong F."/>
            <person name="Gorrell J.H."/>
            <person name="Gu Z."/>
            <person name="Guan P."/>
            <person name="Harris M."/>
            <person name="Harris N.L."/>
            <person name="Harvey D.A."/>
            <person name="Heiman T.J."/>
            <person name="Hernandez J.R."/>
            <person name="Houck J."/>
            <person name="Hostin D."/>
            <person name="Houston K.A."/>
            <person name="Howland T.J."/>
            <person name="Wei M.-H."/>
            <person name="Ibegwam C."/>
            <person name="Jalali M."/>
            <person name="Kalush F."/>
            <person name="Karpen G.H."/>
            <person name="Ke Z."/>
            <person name="Kennison J.A."/>
            <person name="Ketchum K.A."/>
            <person name="Kimmel B.E."/>
            <person name="Kodira C.D."/>
            <person name="Kraft C.L."/>
            <person name="Kravitz S."/>
            <person name="Kulp D."/>
            <person name="Lai Z."/>
            <person name="Lasko P."/>
            <person name="Lei Y."/>
            <person name="Levitsky A.A."/>
            <person name="Li J.H."/>
            <person name="Li Z."/>
            <person name="Liang Y."/>
            <person name="Lin X."/>
            <person name="Liu X."/>
            <person name="Mattei B."/>
            <person name="McIntosh T.C."/>
            <person name="McLeod M.P."/>
            <person name="McPherson D."/>
            <person name="Merkulov G."/>
            <person name="Milshina N.V."/>
            <person name="Mobarry C."/>
            <person name="Morris J."/>
            <person name="Moshrefi A."/>
            <person name="Mount S.M."/>
            <person name="Moy M."/>
            <person name="Murphy B."/>
            <person name="Murphy L."/>
            <person name="Muzny D.M."/>
            <person name="Nelson D.L."/>
            <person name="Nelson D.R."/>
            <person name="Nelson K.A."/>
            <person name="Nixon K."/>
            <person name="Nusskern D.R."/>
            <person name="Pacleb J.M."/>
            <person name="Palazzolo M."/>
            <person name="Pittman G.S."/>
            <person name="Pan S."/>
            <person name="Pollard J."/>
            <person name="Puri V."/>
            <person name="Reese M.G."/>
            <person name="Reinert K."/>
            <person name="Remington K."/>
            <person name="Saunders R.D.C."/>
            <person name="Scheeler F."/>
            <person name="Shen H."/>
            <person name="Shue B.C."/>
            <person name="Siden-Kiamos I."/>
            <person name="Simpson M."/>
            <person name="Skupski M.P."/>
            <person name="Smith T.J."/>
            <person name="Spier E."/>
            <person name="Spradling A.C."/>
            <person name="Stapleton M."/>
            <person name="Strong R."/>
            <person name="Sun E."/>
            <person name="Svirskas R."/>
            <person name="Tector C."/>
            <person name="Turner R."/>
            <person name="Venter E."/>
            <person name="Wang A.H."/>
            <person name="Wang X."/>
            <person name="Wang Z.-Y."/>
            <person name="Wassarman D.A."/>
            <person name="Weinstock G.M."/>
            <person name="Weissenbach J."/>
            <person name="Williams S.M."/>
            <person name="Woodage T."/>
            <person name="Worley K.C."/>
            <person name="Wu D."/>
            <person name="Yang S."/>
            <person name="Yao Q.A."/>
            <person name="Ye J."/>
            <person name="Yeh R.-F."/>
            <person name="Zaveri J.S."/>
            <person name="Zhan M."/>
            <person name="Zhang G."/>
            <person name="Zhao Q."/>
            <person name="Zheng L."/>
            <person name="Zheng X.H."/>
            <person name="Zhong F.N."/>
            <person name="Zhong W."/>
            <person name="Zhou X."/>
            <person name="Zhu S.C."/>
            <person name="Zhu X."/>
            <person name="Smith H.O."/>
            <person name="Gibbs R.A."/>
            <person name="Myers E.W."/>
            <person name="Rubin G.M."/>
            <person name="Venter J.C."/>
        </authorList>
    </citation>
    <scope>NUCLEOTIDE SEQUENCE [LARGE SCALE GENOMIC DNA]</scope>
    <source>
        <strain>Berkeley</strain>
    </source>
</reference>
<reference key="4">
    <citation type="journal article" date="2002" name="Genome Biol.">
        <title>Annotation of the Drosophila melanogaster euchromatic genome: a systematic review.</title>
        <authorList>
            <person name="Misra S."/>
            <person name="Crosby M.A."/>
            <person name="Mungall C.J."/>
            <person name="Matthews B.B."/>
            <person name="Campbell K.S."/>
            <person name="Hradecky P."/>
            <person name="Huang Y."/>
            <person name="Kaminker J.S."/>
            <person name="Millburn G.H."/>
            <person name="Prochnik S.E."/>
            <person name="Smith C.D."/>
            <person name="Tupy J.L."/>
            <person name="Whitfield E.J."/>
            <person name="Bayraktaroglu L."/>
            <person name="Berman B.P."/>
            <person name="Bettencourt B.R."/>
            <person name="Celniker S.E."/>
            <person name="de Grey A.D.N.J."/>
            <person name="Drysdale R.A."/>
            <person name="Harris N.L."/>
            <person name="Richter J."/>
            <person name="Russo S."/>
            <person name="Schroeder A.J."/>
            <person name="Shu S.Q."/>
            <person name="Stapleton M."/>
            <person name="Yamada C."/>
            <person name="Ashburner M."/>
            <person name="Gelbart W.M."/>
            <person name="Rubin G.M."/>
            <person name="Lewis S.E."/>
        </authorList>
    </citation>
    <scope>GENOME REANNOTATION</scope>
    <source>
        <strain>Berkeley</strain>
    </source>
</reference>
<reference key="5">
    <citation type="journal article" date="2002" name="Genome Biol.">
        <title>A Drosophila full-length cDNA resource.</title>
        <authorList>
            <person name="Stapleton M."/>
            <person name="Carlson J.W."/>
            <person name="Brokstein P."/>
            <person name="Yu C."/>
            <person name="Champe M."/>
            <person name="George R.A."/>
            <person name="Guarin H."/>
            <person name="Kronmiller B."/>
            <person name="Pacleb J.M."/>
            <person name="Park S."/>
            <person name="Wan K.H."/>
            <person name="Rubin G.M."/>
            <person name="Celniker S.E."/>
        </authorList>
    </citation>
    <scope>NUCLEOTIDE SEQUENCE [LARGE SCALE MRNA]</scope>
    <source>
        <strain>Berkeley</strain>
        <tissue>Embryo</tissue>
    </source>
</reference>
<reference key="6">
    <citation type="journal article" date="2001" name="J. Cell Biol.">
        <title>Drosophila aurora B kinase is required for histone H3 phosphorylation and condensin recruitment during chromosome condensation and to organize the central spindle during cytokinesis.</title>
        <authorList>
            <person name="Giet R."/>
            <person name="Glover D.M."/>
        </authorList>
    </citation>
    <scope>FUNCTION</scope>
    <scope>SUBCELLULAR LOCATION</scope>
</reference>
<reference key="7">
    <citation type="journal article" date="2001" name="J. Cell Biol.">
        <title>Essential roles of Drosophila inner centromere protein (INCENP) and aurora B in histone H3 phosphorylation, metaphase chromosome alignment, kinetochore disjunction, and chromosome segregation.</title>
        <authorList>
            <person name="Adams R.R."/>
            <person name="Maiato H."/>
            <person name="Earnshaw W.C."/>
            <person name="Carmena M."/>
        </authorList>
    </citation>
    <scope>FUNCTION</scope>
    <scope>SUBCELLULAR LOCATION</scope>
    <scope>INTERACTION WITH INCENP</scope>
</reference>
<reference key="8">
    <citation type="journal article" date="2002" name="EMBO J.">
        <title>Cdc37 is essential for chromosome segregation and cytokinesis in higher eukaryotes.</title>
        <authorList>
            <person name="Lange B.M.H."/>
            <person name="Rebollo E."/>
            <person name="Herold A."/>
            <person name="Gonzalez C."/>
        </authorList>
    </citation>
    <scope>INTERACTION WITH CDC37</scope>
</reference>
<reference key="9">
    <citation type="journal article" date="2006" name="Dev. Cell">
        <title>INCENP and Aurora B promote meiotic sister chromatid cohesion through localization of the Shugoshin MEI-S332 in Drosophila.</title>
        <authorList>
            <person name="Resnick T.D."/>
            <person name="Satinover D.L."/>
            <person name="MacIsaac F."/>
            <person name="Stukenberg P.T."/>
            <person name="Earnshaw W.C."/>
            <person name="Orr-Weaver T.L."/>
            <person name="Carmena M."/>
        </authorList>
    </citation>
    <scope>FUNCTION</scope>
</reference>
<reference key="10">
    <citation type="journal article" date="2015" name="PLoS Genet.">
        <title>Abscission is regulated by the ESCRT-III protein shrub in Drosophila germline stem cells.</title>
        <authorList>
            <person name="Matias N.R."/>
            <person name="Mathieu J."/>
            <person name="Huynh J.R."/>
        </authorList>
    </citation>
    <scope>FUNCTION</scope>
</reference>
<protein>
    <recommendedName>
        <fullName evidence="14">Aurora kinase B</fullName>
        <ecNumber>2.7.11.1</ecNumber>
    </recommendedName>
    <alternativeName>
        <fullName evidence="13">IPL1/Aurora-like protein kinase</fullName>
    </alternativeName>
    <alternativeName>
        <fullName evidence="12">Serine/threonine-protein kinase Ial</fullName>
    </alternativeName>
    <alternativeName>
        <fullName evidence="13">Serine/threonine-protein kinase aurora-B</fullName>
    </alternativeName>
</protein>
<proteinExistence type="evidence at protein level"/>
<name>AURKB_DROME</name>
<feature type="chain" id="PRO_0000280545" description="Aurora kinase B">
    <location>
        <begin position="1"/>
        <end position="329"/>
    </location>
</feature>
<feature type="domain" description="Protein kinase" evidence="2">
    <location>
        <begin position="53"/>
        <end position="305"/>
    </location>
</feature>
<feature type="region of interest" description="Disordered" evidence="4">
    <location>
        <begin position="1"/>
        <end position="21"/>
    </location>
</feature>
<feature type="compositionally biased region" description="Basic residues" evidence="4">
    <location>
        <begin position="1"/>
        <end position="14"/>
    </location>
</feature>
<feature type="active site" description="Proton acceptor" evidence="2 3">
    <location>
        <position position="178"/>
    </location>
</feature>
<feature type="binding site" evidence="2">
    <location>
        <begin position="59"/>
        <end position="67"/>
    </location>
    <ligand>
        <name>ATP</name>
        <dbReference type="ChEBI" id="CHEBI:30616"/>
    </ligand>
</feature>
<feature type="binding site" evidence="2">
    <location>
        <position position="82"/>
    </location>
    <ligand>
        <name>ATP</name>
        <dbReference type="ChEBI" id="CHEBI:30616"/>
    </ligand>
</feature>
<feature type="sequence conflict" description="In Ref. 1; AAD34349 and 2; AAD37504." evidence="14" ref="1 2">
    <original>E</original>
    <variation>D</variation>
    <location>
        <position position="320"/>
    </location>
</feature>
<dbReference type="EC" id="2.7.11.1"/>
<dbReference type="EMBL" id="AF121358">
    <property type="protein sequence ID" value="AAD34349.1"/>
    <property type="status" value="ALT_FRAME"/>
    <property type="molecule type" value="mRNA"/>
</dbReference>
<dbReference type="EMBL" id="AF121361">
    <property type="protein sequence ID" value="AAD37504.1"/>
    <property type="status" value="ALT_FRAME"/>
    <property type="molecule type" value="Genomic_DNA"/>
</dbReference>
<dbReference type="EMBL" id="AE014134">
    <property type="protein sequence ID" value="AAF53026.1"/>
    <property type="molecule type" value="Genomic_DNA"/>
</dbReference>
<dbReference type="EMBL" id="AY118562">
    <property type="protein sequence ID" value="AAM49931.1"/>
    <property type="molecule type" value="mRNA"/>
</dbReference>
<dbReference type="RefSeq" id="NP_477336.1">
    <property type="nucleotide sequence ID" value="NM_057988.4"/>
</dbReference>
<dbReference type="SMR" id="Q9VKN7"/>
<dbReference type="BioGRID" id="60576">
    <property type="interactions" value="11"/>
</dbReference>
<dbReference type="ComplexPortal" id="CPX-8069">
    <property type="entry name" value="Chromosomal passenger complex, mitotic variant"/>
</dbReference>
<dbReference type="ComplexPortal" id="CPX-8071">
    <property type="entry name" value="Chromosomal passenger complex, meiotic variant"/>
</dbReference>
<dbReference type="FunCoup" id="Q9VKN7">
    <property type="interactions" value="45"/>
</dbReference>
<dbReference type="IntAct" id="Q9VKN7">
    <property type="interactions" value="26"/>
</dbReference>
<dbReference type="STRING" id="7227.FBpp0079769"/>
<dbReference type="ChEMBL" id="CHEMBL3308999"/>
<dbReference type="PaxDb" id="7227-FBpp0079769"/>
<dbReference type="DNASU" id="34504"/>
<dbReference type="EnsemblMetazoa" id="FBtr0080180">
    <property type="protein sequence ID" value="FBpp0079769"/>
    <property type="gene ID" value="FBgn0024227"/>
</dbReference>
<dbReference type="GeneID" id="34504"/>
<dbReference type="KEGG" id="dme:Dmel_CG6620"/>
<dbReference type="AGR" id="FB:FBgn0024227"/>
<dbReference type="CTD" id="34504"/>
<dbReference type="FlyBase" id="FBgn0024227">
    <property type="gene designation" value="aurB"/>
</dbReference>
<dbReference type="VEuPathDB" id="VectorBase:FBgn0024227"/>
<dbReference type="eggNOG" id="KOG0580">
    <property type="taxonomic scope" value="Eukaryota"/>
</dbReference>
<dbReference type="HOGENOM" id="CLU_000288_63_0_1"/>
<dbReference type="InParanoid" id="Q9VKN7"/>
<dbReference type="OMA" id="YVDHWCL"/>
<dbReference type="OrthoDB" id="377346at2759"/>
<dbReference type="PhylomeDB" id="Q9VKN7"/>
<dbReference type="Reactome" id="R-DME-174178">
    <property type="pathway name" value="APC/C:Cdh1 mediated degradation of Cdc20 and other APC/C:Cdh1 targeted proteins in late mitosis/early G1"/>
</dbReference>
<dbReference type="Reactome" id="R-DME-4615885">
    <property type="pathway name" value="SUMOylation of DNA replication proteins"/>
</dbReference>
<dbReference type="Reactome" id="R-DME-6804756">
    <property type="pathway name" value="Regulation of TP53 Activity through Phosphorylation"/>
</dbReference>
<dbReference type="SignaLink" id="Q9VKN7"/>
<dbReference type="BioGRID-ORCS" id="34504">
    <property type="hits" value="0 hits in 3 CRISPR screens"/>
</dbReference>
<dbReference type="GenomeRNAi" id="34504"/>
<dbReference type="PRO" id="PR:Q9VKN7"/>
<dbReference type="Proteomes" id="UP000000803">
    <property type="component" value="Chromosome 2L"/>
</dbReference>
<dbReference type="Bgee" id="FBgn0024227">
    <property type="expression patterns" value="Expressed in secondary oocyte and 50 other cell types or tissues"/>
</dbReference>
<dbReference type="GO" id="GO:0005813">
    <property type="term" value="C:centrosome"/>
    <property type="evidence" value="ECO:0000318"/>
    <property type="project" value="GO_Central"/>
</dbReference>
<dbReference type="GO" id="GO:0032133">
    <property type="term" value="C:chromosome passenger complex"/>
    <property type="evidence" value="ECO:0000314"/>
    <property type="project" value="FlyBase"/>
</dbReference>
<dbReference type="GO" id="GO:0000775">
    <property type="term" value="C:chromosome, centromeric region"/>
    <property type="evidence" value="ECO:0000314"/>
    <property type="project" value="FlyBase"/>
</dbReference>
<dbReference type="GO" id="GO:0000779">
    <property type="term" value="C:condensed chromosome, centromeric region"/>
    <property type="evidence" value="ECO:0000314"/>
    <property type="project" value="FlyBase"/>
</dbReference>
<dbReference type="GO" id="GO:0005737">
    <property type="term" value="C:cytoplasm"/>
    <property type="evidence" value="ECO:0007669"/>
    <property type="project" value="UniProtKB-KW"/>
</dbReference>
<dbReference type="GO" id="GO:0000776">
    <property type="term" value="C:kinetochore"/>
    <property type="evidence" value="ECO:0000314"/>
    <property type="project" value="FlyBase"/>
</dbReference>
<dbReference type="GO" id="GO:1990385">
    <property type="term" value="C:meiotic spindle midzone"/>
    <property type="evidence" value="ECO:0000314"/>
    <property type="project" value="FlyBase"/>
</dbReference>
<dbReference type="GO" id="GO:0030496">
    <property type="term" value="C:midbody"/>
    <property type="evidence" value="ECO:0000314"/>
    <property type="project" value="FlyBase"/>
</dbReference>
<dbReference type="GO" id="GO:0005634">
    <property type="term" value="C:nucleus"/>
    <property type="evidence" value="ECO:0000318"/>
    <property type="project" value="GO_Central"/>
</dbReference>
<dbReference type="GO" id="GO:0005819">
    <property type="term" value="C:spindle"/>
    <property type="evidence" value="ECO:0000314"/>
    <property type="project" value="FlyBase"/>
</dbReference>
<dbReference type="GO" id="GO:0005876">
    <property type="term" value="C:spindle microtubule"/>
    <property type="evidence" value="ECO:0000318"/>
    <property type="project" value="GO_Central"/>
</dbReference>
<dbReference type="GO" id="GO:0051233">
    <property type="term" value="C:spindle midzone"/>
    <property type="evidence" value="ECO:0000314"/>
    <property type="project" value="FlyBase"/>
</dbReference>
<dbReference type="GO" id="GO:0000922">
    <property type="term" value="C:spindle pole"/>
    <property type="evidence" value="ECO:0000318"/>
    <property type="project" value="GO_Central"/>
</dbReference>
<dbReference type="GO" id="GO:0005524">
    <property type="term" value="F:ATP binding"/>
    <property type="evidence" value="ECO:0007669"/>
    <property type="project" value="UniProtKB-KW"/>
</dbReference>
<dbReference type="GO" id="GO:0046872">
    <property type="term" value="F:metal ion binding"/>
    <property type="evidence" value="ECO:0007669"/>
    <property type="project" value="UniProtKB-KW"/>
</dbReference>
<dbReference type="GO" id="GO:0106310">
    <property type="term" value="F:protein serine kinase activity"/>
    <property type="evidence" value="ECO:0007669"/>
    <property type="project" value="RHEA"/>
</dbReference>
<dbReference type="GO" id="GO:0004674">
    <property type="term" value="F:protein serine/threonine kinase activity"/>
    <property type="evidence" value="ECO:0000315"/>
    <property type="project" value="FlyBase"/>
</dbReference>
<dbReference type="GO" id="GO:0004712">
    <property type="term" value="F:protein serine/threonine/tyrosine kinase activity"/>
    <property type="evidence" value="ECO:0000314"/>
    <property type="project" value="FlyBase"/>
</dbReference>
<dbReference type="GO" id="GO:0006325">
    <property type="term" value="P:chromatin organization"/>
    <property type="evidence" value="ECO:0000315"/>
    <property type="project" value="FlyBase"/>
</dbReference>
<dbReference type="GO" id="GO:0030261">
    <property type="term" value="P:chromosome condensation"/>
    <property type="evidence" value="ECO:0000315"/>
    <property type="project" value="FlyBase"/>
</dbReference>
<dbReference type="GO" id="GO:0048132">
    <property type="term" value="P:female germ-line stem cell asymmetric division"/>
    <property type="evidence" value="ECO:0000316"/>
    <property type="project" value="FlyBase"/>
</dbReference>
<dbReference type="GO" id="GO:0051321">
    <property type="term" value="P:meiotic cell cycle"/>
    <property type="evidence" value="ECO:0007669"/>
    <property type="project" value="UniProtKB-KW"/>
</dbReference>
<dbReference type="GO" id="GO:0061952">
    <property type="term" value="P:midbody abscission"/>
    <property type="evidence" value="ECO:0000315"/>
    <property type="project" value="FlyBase"/>
</dbReference>
<dbReference type="GO" id="GO:0007076">
    <property type="term" value="P:mitotic chromosome condensation"/>
    <property type="evidence" value="ECO:0000315"/>
    <property type="project" value="FlyBase"/>
</dbReference>
<dbReference type="GO" id="GO:0000281">
    <property type="term" value="P:mitotic cytokinesis"/>
    <property type="evidence" value="ECO:0000315"/>
    <property type="project" value="FlyBase"/>
</dbReference>
<dbReference type="GO" id="GO:1990758">
    <property type="term" value="P:mitotic sister chromatid biorientation"/>
    <property type="evidence" value="ECO:0000250"/>
    <property type="project" value="UniProtKB"/>
</dbReference>
<dbReference type="GO" id="GO:0000070">
    <property type="term" value="P:mitotic sister chromatid segregation"/>
    <property type="evidence" value="ECO:0000315"/>
    <property type="project" value="FlyBase"/>
</dbReference>
<dbReference type="GO" id="GO:0007052">
    <property type="term" value="P:mitotic spindle organization"/>
    <property type="evidence" value="ECO:0000318"/>
    <property type="project" value="GO_Central"/>
</dbReference>
<dbReference type="GO" id="GO:0043687">
    <property type="term" value="P:post-translational protein modification"/>
    <property type="evidence" value="ECO:0000315"/>
    <property type="project" value="FlyBase"/>
</dbReference>
<dbReference type="GO" id="GO:0032465">
    <property type="term" value="P:regulation of cytokinesis"/>
    <property type="evidence" value="ECO:0000318"/>
    <property type="project" value="GO_Central"/>
</dbReference>
<dbReference type="GO" id="GO:0140273">
    <property type="term" value="P:repair of mitotic kinetochore microtubule attachment defect"/>
    <property type="evidence" value="ECO:0000250"/>
    <property type="project" value="UniProtKB"/>
</dbReference>
<dbReference type="CDD" id="cd14007">
    <property type="entry name" value="STKc_Aurora"/>
    <property type="match status" value="1"/>
</dbReference>
<dbReference type="FunFam" id="3.30.200.20:FF:000042">
    <property type="entry name" value="Aurora kinase A"/>
    <property type="match status" value="1"/>
</dbReference>
<dbReference type="FunFam" id="1.10.510.10:FF:000235">
    <property type="entry name" value="Serine/threonine-protein kinase ark1"/>
    <property type="match status" value="1"/>
</dbReference>
<dbReference type="Gene3D" id="1.10.510.10">
    <property type="entry name" value="Transferase(Phosphotransferase) domain 1"/>
    <property type="match status" value="1"/>
</dbReference>
<dbReference type="InterPro" id="IPR030616">
    <property type="entry name" value="Aur-like"/>
</dbReference>
<dbReference type="InterPro" id="IPR011009">
    <property type="entry name" value="Kinase-like_dom_sf"/>
</dbReference>
<dbReference type="InterPro" id="IPR000719">
    <property type="entry name" value="Prot_kinase_dom"/>
</dbReference>
<dbReference type="InterPro" id="IPR017441">
    <property type="entry name" value="Protein_kinase_ATP_BS"/>
</dbReference>
<dbReference type="InterPro" id="IPR008271">
    <property type="entry name" value="Ser/Thr_kinase_AS"/>
</dbReference>
<dbReference type="PANTHER" id="PTHR24350">
    <property type="entry name" value="SERINE/THREONINE-PROTEIN KINASE IAL-RELATED"/>
    <property type="match status" value="1"/>
</dbReference>
<dbReference type="Pfam" id="PF00069">
    <property type="entry name" value="Pkinase"/>
    <property type="match status" value="1"/>
</dbReference>
<dbReference type="PIRSF" id="PIRSF000654">
    <property type="entry name" value="Integrin-linked_kinase"/>
    <property type="match status" value="1"/>
</dbReference>
<dbReference type="SMART" id="SM00220">
    <property type="entry name" value="S_TKc"/>
    <property type="match status" value="1"/>
</dbReference>
<dbReference type="SUPFAM" id="SSF56112">
    <property type="entry name" value="Protein kinase-like (PK-like)"/>
    <property type="match status" value="1"/>
</dbReference>
<dbReference type="PROSITE" id="PS00107">
    <property type="entry name" value="PROTEIN_KINASE_ATP"/>
    <property type="match status" value="1"/>
</dbReference>
<dbReference type="PROSITE" id="PS50011">
    <property type="entry name" value="PROTEIN_KINASE_DOM"/>
    <property type="match status" value="1"/>
</dbReference>
<dbReference type="PROSITE" id="PS00108">
    <property type="entry name" value="PROTEIN_KINASE_ST"/>
    <property type="match status" value="1"/>
</dbReference>
<organism>
    <name type="scientific">Drosophila melanogaster</name>
    <name type="common">Fruit fly</name>
    <dbReference type="NCBI Taxonomy" id="7227"/>
    <lineage>
        <taxon>Eukaryota</taxon>
        <taxon>Metazoa</taxon>
        <taxon>Ecdysozoa</taxon>
        <taxon>Arthropoda</taxon>
        <taxon>Hexapoda</taxon>
        <taxon>Insecta</taxon>
        <taxon>Pterygota</taxon>
        <taxon>Neoptera</taxon>
        <taxon>Endopterygota</taxon>
        <taxon>Diptera</taxon>
        <taxon>Brachycera</taxon>
        <taxon>Muscomorpha</taxon>
        <taxon>Ephydroidea</taxon>
        <taxon>Drosophilidae</taxon>
        <taxon>Drosophila</taxon>
        <taxon>Sophophora</taxon>
    </lineage>
</organism>
<comment type="function">
    <text evidence="7 8 10 11">Serine/threonine-protein kinase that mediates both meiotic and mitotic chromosome segregation. Required for histone H3 'Ser-10' phosphorylation. Phosphorylates mei-S332 within residues 124-126 and stabilizes its association with centromeres during meiosis. May regulate the function of the ESCRT-III complex core component shrb during abscission of germline cells in oogenesis (PubMed:25647097).</text>
</comment>
<comment type="catalytic activity">
    <reaction>
        <text>L-seryl-[protein] + ATP = O-phospho-L-seryl-[protein] + ADP + H(+)</text>
        <dbReference type="Rhea" id="RHEA:17989"/>
        <dbReference type="Rhea" id="RHEA-COMP:9863"/>
        <dbReference type="Rhea" id="RHEA-COMP:11604"/>
        <dbReference type="ChEBI" id="CHEBI:15378"/>
        <dbReference type="ChEBI" id="CHEBI:29999"/>
        <dbReference type="ChEBI" id="CHEBI:30616"/>
        <dbReference type="ChEBI" id="CHEBI:83421"/>
        <dbReference type="ChEBI" id="CHEBI:456216"/>
        <dbReference type="EC" id="2.7.11.1"/>
    </reaction>
</comment>
<comment type="catalytic activity">
    <reaction>
        <text>L-threonyl-[protein] + ATP = O-phospho-L-threonyl-[protein] + ADP + H(+)</text>
        <dbReference type="Rhea" id="RHEA:46608"/>
        <dbReference type="Rhea" id="RHEA-COMP:11060"/>
        <dbReference type="Rhea" id="RHEA-COMP:11605"/>
        <dbReference type="ChEBI" id="CHEBI:15378"/>
        <dbReference type="ChEBI" id="CHEBI:30013"/>
        <dbReference type="ChEBI" id="CHEBI:30616"/>
        <dbReference type="ChEBI" id="CHEBI:61977"/>
        <dbReference type="ChEBI" id="CHEBI:456216"/>
        <dbReference type="EC" id="2.7.11.1"/>
    </reaction>
</comment>
<comment type="cofactor">
    <cofactor evidence="1">
        <name>Mg(2+)</name>
        <dbReference type="ChEBI" id="CHEBI:18420"/>
    </cofactor>
</comment>
<comment type="subunit">
    <text evidence="8 9">Interacts with Incenp and Cdc37.</text>
</comment>
<comment type="subcellular location">
    <subcellularLocation>
        <location>Chromosome</location>
    </subcellularLocation>
    <subcellularLocation>
        <location>Cytoplasm</location>
        <location>Cytoskeleton</location>
    </subcellularLocation>
    <subcellularLocation>
        <location>Midbody</location>
    </subcellularLocation>
    <text>Meiotic and mitotic chromosomes. During each division, relocates to the midbody microtubules.</text>
</comment>
<comment type="developmental stage">
    <text evidence="5 6">Ubiquitously expressed at very high levels in embryo. Expressed at low levels during larval stages, and at higher levels in female adults (at protein level).</text>
</comment>
<comment type="similarity">
    <text evidence="2">Belongs to the protein kinase superfamily. Ser/Thr protein kinase family. Aurora subfamily.</text>
</comment>
<comment type="sequence caution" evidence="14">
    <conflict type="frameshift">
        <sequence resource="EMBL-CDS" id="AAD34349"/>
    </conflict>
</comment>
<comment type="sequence caution" evidence="14">
    <conflict type="frameshift">
        <sequence resource="EMBL-CDS" id="AAD37504"/>
    </conflict>
</comment>
<keyword id="KW-0067">ATP-binding</keyword>
<keyword id="KW-0131">Cell cycle</keyword>
<keyword id="KW-0132">Cell division</keyword>
<keyword id="KW-0156">Chromatin regulator</keyword>
<keyword id="KW-0158">Chromosome</keyword>
<keyword id="KW-0159">Chromosome partition</keyword>
<keyword id="KW-0963">Cytoplasm</keyword>
<keyword id="KW-0206">Cytoskeleton</keyword>
<keyword id="KW-0418">Kinase</keyword>
<keyword id="KW-0460">Magnesium</keyword>
<keyword id="KW-0469">Meiosis</keyword>
<keyword id="KW-0479">Metal-binding</keyword>
<keyword id="KW-0498">Mitosis</keyword>
<keyword id="KW-0547">Nucleotide-binding</keyword>
<keyword id="KW-1185">Reference proteome</keyword>
<keyword id="KW-0723">Serine/threonine-protein kinase</keyword>
<keyword id="KW-0808">Transferase</keyword>
<evidence type="ECO:0000250" key="1"/>
<evidence type="ECO:0000255" key="2">
    <source>
        <dbReference type="PROSITE-ProRule" id="PRU00159"/>
    </source>
</evidence>
<evidence type="ECO:0000255" key="3">
    <source>
        <dbReference type="PROSITE-ProRule" id="PRU10027"/>
    </source>
</evidence>
<evidence type="ECO:0000256" key="4">
    <source>
        <dbReference type="SAM" id="MobiDB-lite"/>
    </source>
</evidence>
<evidence type="ECO:0000269" key="5">
    <source>
    </source>
</evidence>
<evidence type="ECO:0000269" key="6">
    <source>
    </source>
</evidence>
<evidence type="ECO:0000269" key="7">
    <source>
    </source>
</evidence>
<evidence type="ECO:0000269" key="8">
    <source>
    </source>
</evidence>
<evidence type="ECO:0000269" key="9">
    <source>
    </source>
</evidence>
<evidence type="ECO:0000269" key="10">
    <source>
    </source>
</evidence>
<evidence type="ECO:0000269" key="11">
    <source>
    </source>
</evidence>
<evidence type="ECO:0000303" key="12">
    <source>
    </source>
</evidence>
<evidence type="ECO:0000303" key="13">
    <source>
    </source>
</evidence>
<evidence type="ECO:0000305" key="14"/>
<evidence type="ECO:0000312" key="15">
    <source>
        <dbReference type="FlyBase" id="FBgn0024227"/>
    </source>
</evidence>
<sequence>MTLSRAKHANRNHLPHLLAKVPEEHQEPIKNMCLKMMSHDAYGQPYDWSPRDFEMGAHLGRGKFGRVYLARERHSHYLVAMKVMFKEELRKGCVQRQVLREIEIQSRLKHPHILRLLTWFHDESRIYLALEIASEGELFKHLRGAPNHRFDEPRSAKYTYQVANALNYCHLNNVIHRDLKPENILLTSTDDLKLADFGWSAHTPNNKRRTLCGTLDYLPPEMVDGNSYDDSVDQWCLGILCYEFVVGCPPFESNSTESTYSKIRRMEISYPSHLSKGCKELIGGLLRKESKGRITLVDVMTHYWVKAGMAERELQLQKRERGKENTARN</sequence>
<accession>Q9VKN7</accession>
<accession>Q9XTQ0</accession>